<organism>
    <name type="scientific">Burkholderia orbicola (strain MC0-3)</name>
    <dbReference type="NCBI Taxonomy" id="406425"/>
    <lineage>
        <taxon>Bacteria</taxon>
        <taxon>Pseudomonadati</taxon>
        <taxon>Pseudomonadota</taxon>
        <taxon>Betaproteobacteria</taxon>
        <taxon>Burkholderiales</taxon>
        <taxon>Burkholderiaceae</taxon>
        <taxon>Burkholderia</taxon>
        <taxon>Burkholderia cepacia complex</taxon>
        <taxon>Burkholderia orbicola</taxon>
    </lineage>
</organism>
<evidence type="ECO:0000255" key="1">
    <source>
        <dbReference type="HAMAP-Rule" id="MF_00336"/>
    </source>
</evidence>
<gene>
    <name evidence="1" type="primary">bioD</name>
    <name type="ordered locus">Bcenmc03_2948</name>
</gene>
<proteinExistence type="inferred from homology"/>
<keyword id="KW-0067">ATP-binding</keyword>
<keyword id="KW-0093">Biotin biosynthesis</keyword>
<keyword id="KW-0963">Cytoplasm</keyword>
<keyword id="KW-0436">Ligase</keyword>
<keyword id="KW-0460">Magnesium</keyword>
<keyword id="KW-0479">Metal-binding</keyword>
<keyword id="KW-0547">Nucleotide-binding</keyword>
<feature type="chain" id="PRO_1000119861" description="ATP-dependent dethiobiotin synthetase BioD">
    <location>
        <begin position="1"/>
        <end position="239"/>
    </location>
</feature>
<feature type="active site" evidence="1">
    <location>
        <position position="40"/>
    </location>
</feature>
<feature type="binding site" evidence="1">
    <location>
        <begin position="15"/>
        <end position="20"/>
    </location>
    <ligand>
        <name>ATP</name>
        <dbReference type="ChEBI" id="CHEBI:30616"/>
    </ligand>
</feature>
<feature type="binding site" evidence="1">
    <location>
        <position position="19"/>
    </location>
    <ligand>
        <name>Mg(2+)</name>
        <dbReference type="ChEBI" id="CHEBI:18420"/>
    </ligand>
</feature>
<feature type="binding site" evidence="1">
    <location>
        <position position="57"/>
    </location>
    <ligand>
        <name>ATP</name>
        <dbReference type="ChEBI" id="CHEBI:30616"/>
    </ligand>
</feature>
<feature type="binding site" evidence="1">
    <location>
        <position position="57"/>
    </location>
    <ligand>
        <name>Mg(2+)</name>
        <dbReference type="ChEBI" id="CHEBI:18420"/>
    </ligand>
</feature>
<feature type="binding site" evidence="1">
    <location>
        <begin position="118"/>
        <end position="121"/>
    </location>
    <ligand>
        <name>ATP</name>
        <dbReference type="ChEBI" id="CHEBI:30616"/>
    </ligand>
</feature>
<feature type="binding site" evidence="1">
    <location>
        <position position="118"/>
    </location>
    <ligand>
        <name>Mg(2+)</name>
        <dbReference type="ChEBI" id="CHEBI:18420"/>
    </ligand>
</feature>
<feature type="binding site" evidence="1">
    <location>
        <begin position="178"/>
        <end position="179"/>
    </location>
    <ligand>
        <name>ATP</name>
        <dbReference type="ChEBI" id="CHEBI:30616"/>
    </ligand>
</feature>
<name>BIOD_BURO0</name>
<accession>B1JZE0</accession>
<reference key="1">
    <citation type="submission" date="2008-02" db="EMBL/GenBank/DDBJ databases">
        <title>Complete sequence of chromosome 1 of Burkholderia cenocepacia MC0-3.</title>
        <authorList>
            <person name="Copeland A."/>
            <person name="Lucas S."/>
            <person name="Lapidus A."/>
            <person name="Barry K."/>
            <person name="Bruce D."/>
            <person name="Goodwin L."/>
            <person name="Glavina del Rio T."/>
            <person name="Dalin E."/>
            <person name="Tice H."/>
            <person name="Pitluck S."/>
            <person name="Chain P."/>
            <person name="Malfatti S."/>
            <person name="Shin M."/>
            <person name="Vergez L."/>
            <person name="Schmutz J."/>
            <person name="Larimer F."/>
            <person name="Land M."/>
            <person name="Hauser L."/>
            <person name="Kyrpides N."/>
            <person name="Mikhailova N."/>
            <person name="Tiedje J."/>
            <person name="Richardson P."/>
        </authorList>
    </citation>
    <scope>NUCLEOTIDE SEQUENCE [LARGE SCALE GENOMIC DNA]</scope>
    <source>
        <strain>MC0-3</strain>
    </source>
</reference>
<protein>
    <recommendedName>
        <fullName evidence="1">ATP-dependent dethiobiotin synthetase BioD</fullName>
        <ecNumber evidence="1">6.3.3.3</ecNumber>
    </recommendedName>
    <alternativeName>
        <fullName evidence="1">DTB synthetase</fullName>
        <shortName evidence="1">DTBS</shortName>
    </alternativeName>
    <alternativeName>
        <fullName evidence="1">Dethiobiotin synthase</fullName>
    </alternativeName>
</protein>
<dbReference type="EC" id="6.3.3.3" evidence="1"/>
<dbReference type="EMBL" id="CP000958">
    <property type="protein sequence ID" value="ACA92106.1"/>
    <property type="molecule type" value="Genomic_DNA"/>
</dbReference>
<dbReference type="RefSeq" id="WP_012329325.1">
    <property type="nucleotide sequence ID" value="NC_010508.1"/>
</dbReference>
<dbReference type="SMR" id="B1JZE0"/>
<dbReference type="GeneID" id="83049728"/>
<dbReference type="KEGG" id="bcm:Bcenmc03_2948"/>
<dbReference type="HOGENOM" id="CLU_072551_0_0_4"/>
<dbReference type="UniPathway" id="UPA00078">
    <property type="reaction ID" value="UER00161"/>
</dbReference>
<dbReference type="Proteomes" id="UP000002169">
    <property type="component" value="Chromosome 1"/>
</dbReference>
<dbReference type="GO" id="GO:0005829">
    <property type="term" value="C:cytosol"/>
    <property type="evidence" value="ECO:0007669"/>
    <property type="project" value="TreeGrafter"/>
</dbReference>
<dbReference type="GO" id="GO:0005524">
    <property type="term" value="F:ATP binding"/>
    <property type="evidence" value="ECO:0007669"/>
    <property type="project" value="UniProtKB-UniRule"/>
</dbReference>
<dbReference type="GO" id="GO:0004141">
    <property type="term" value="F:dethiobiotin synthase activity"/>
    <property type="evidence" value="ECO:0007669"/>
    <property type="project" value="UniProtKB-UniRule"/>
</dbReference>
<dbReference type="GO" id="GO:0000287">
    <property type="term" value="F:magnesium ion binding"/>
    <property type="evidence" value="ECO:0007669"/>
    <property type="project" value="UniProtKB-UniRule"/>
</dbReference>
<dbReference type="GO" id="GO:0009102">
    <property type="term" value="P:biotin biosynthetic process"/>
    <property type="evidence" value="ECO:0007669"/>
    <property type="project" value="UniProtKB-UniRule"/>
</dbReference>
<dbReference type="CDD" id="cd03109">
    <property type="entry name" value="DTBS"/>
    <property type="match status" value="1"/>
</dbReference>
<dbReference type="FunFam" id="3.40.50.300:FF:000292">
    <property type="entry name" value="ATP-dependent dethiobiotin synthetase BioD"/>
    <property type="match status" value="1"/>
</dbReference>
<dbReference type="Gene3D" id="3.40.50.300">
    <property type="entry name" value="P-loop containing nucleotide triphosphate hydrolases"/>
    <property type="match status" value="1"/>
</dbReference>
<dbReference type="HAMAP" id="MF_00336">
    <property type="entry name" value="BioD"/>
    <property type="match status" value="1"/>
</dbReference>
<dbReference type="InterPro" id="IPR004472">
    <property type="entry name" value="DTB_synth_BioD"/>
</dbReference>
<dbReference type="InterPro" id="IPR027417">
    <property type="entry name" value="P-loop_NTPase"/>
</dbReference>
<dbReference type="NCBIfam" id="TIGR00347">
    <property type="entry name" value="bioD"/>
    <property type="match status" value="1"/>
</dbReference>
<dbReference type="PANTHER" id="PTHR43210">
    <property type="entry name" value="DETHIOBIOTIN SYNTHETASE"/>
    <property type="match status" value="1"/>
</dbReference>
<dbReference type="PANTHER" id="PTHR43210:SF5">
    <property type="entry name" value="DETHIOBIOTIN SYNTHETASE"/>
    <property type="match status" value="1"/>
</dbReference>
<dbReference type="Pfam" id="PF13500">
    <property type="entry name" value="AAA_26"/>
    <property type="match status" value="1"/>
</dbReference>
<dbReference type="PIRSF" id="PIRSF006755">
    <property type="entry name" value="DTB_synth"/>
    <property type="match status" value="1"/>
</dbReference>
<dbReference type="SUPFAM" id="SSF52540">
    <property type="entry name" value="P-loop containing nucleoside triphosphate hydrolases"/>
    <property type="match status" value="1"/>
</dbReference>
<comment type="function">
    <text evidence="1">Catalyzes a mechanistically unusual reaction, the ATP-dependent insertion of CO2 between the N7 and N8 nitrogen atoms of 7,8-diaminopelargonic acid (DAPA, also called 7,8-diammoniononanoate) to form a ureido ring.</text>
</comment>
<comment type="catalytic activity">
    <reaction evidence="1">
        <text>(7R,8S)-7,8-diammoniononanoate + CO2 + ATP = (4R,5S)-dethiobiotin + ADP + phosphate + 3 H(+)</text>
        <dbReference type="Rhea" id="RHEA:15805"/>
        <dbReference type="ChEBI" id="CHEBI:15378"/>
        <dbReference type="ChEBI" id="CHEBI:16526"/>
        <dbReference type="ChEBI" id="CHEBI:30616"/>
        <dbReference type="ChEBI" id="CHEBI:43474"/>
        <dbReference type="ChEBI" id="CHEBI:149469"/>
        <dbReference type="ChEBI" id="CHEBI:149473"/>
        <dbReference type="ChEBI" id="CHEBI:456216"/>
        <dbReference type="EC" id="6.3.3.3"/>
    </reaction>
</comment>
<comment type="cofactor">
    <cofactor evidence="1">
        <name>Mg(2+)</name>
        <dbReference type="ChEBI" id="CHEBI:18420"/>
    </cofactor>
</comment>
<comment type="pathway">
    <text evidence="1">Cofactor biosynthesis; biotin biosynthesis; biotin from 7,8-diaminononanoate: step 1/2.</text>
</comment>
<comment type="subunit">
    <text evidence="1">Homodimer.</text>
</comment>
<comment type="subcellular location">
    <subcellularLocation>
        <location evidence="1">Cytoplasm</location>
    </subcellularLocation>
</comment>
<comment type="similarity">
    <text evidence="1">Belongs to the dethiobiotin synthetase family.</text>
</comment>
<sequence>MSAPLSVFVTGTDTEIGKTFVSAAMLHGFARHGLRAAALKPIAAGAYERDGVWRNEDADQLDAAANVALPPELRTPFLLKAPAAPHIVAAQEGVTLDLDTIVACHREALTRADVVVVEGVGGFRVPLNDTQDTADLAVALGLPVVLVVGVRLGCISHALLTADAIRQRGLTLAGWVANHVDPAMSFADENVATIRDWLARERRAPLIGRIAHMTPAAPESAAAMLDIAALVESLRTARH</sequence>